<evidence type="ECO:0000250" key="1">
    <source>
        <dbReference type="UniProtKB" id="P37610"/>
    </source>
</evidence>
<evidence type="ECO:0000269" key="2">
    <source>
    </source>
</evidence>
<evidence type="ECO:0000269" key="3">
    <source>
    </source>
</evidence>
<evidence type="ECO:0000269" key="4">
    <source ref="5"/>
</evidence>
<evidence type="ECO:0000303" key="5">
    <source>
    </source>
</evidence>
<evidence type="ECO:0000305" key="6"/>
<evidence type="ECO:0000305" key="7">
    <source ref="5"/>
</evidence>
<keyword id="KW-0223">Dioxygenase</keyword>
<keyword id="KW-0903">Direct protein sequencing</keyword>
<keyword id="KW-0408">Iron</keyword>
<keyword id="KW-0479">Metal-binding</keyword>
<keyword id="KW-0560">Oxidoreductase</keyword>
<keyword id="KW-0614">Plasmid</keyword>
<keyword id="KW-0847">Vitamin C</keyword>
<reference key="1">
    <citation type="journal article" date="2004" name="Appl. Environ. Microbiol.">
        <title>Localization and characterization of two novel genes encoding stereospecific dioxygenases catalyzing 2(2,4-dichlorophenoxy)propionate cleavage in Delftia acidovorans MC1.</title>
        <authorList>
            <person name="Schleinitz K.M."/>
            <person name="Kleinsteuber S."/>
            <person name="Vallaeys T."/>
            <person name="Babel W."/>
        </authorList>
    </citation>
    <scope>NUCLEOTIDE SEQUENCE [GENOMIC DNA]</scope>
    <source>
        <strain>MC1</strain>
        <plasmid>pMC1</plasmid>
    </source>
</reference>
<reference key="2">
    <citation type="submission" date="2009-09" db="EMBL/GenBank/DDBJ databases">
        <title>Genetic background of enantiospecific 2,4-dichlorophenoxypropionate cleavage in Delftia acidovorans MC1.</title>
        <authorList>
            <person name="Schleinitz K.M."/>
            <person name="Kleinsteuber S."/>
            <person name="Vallaeys T."/>
            <person name="Babel W."/>
        </authorList>
    </citation>
    <scope>NUCLEOTIDE SEQUENCE [GENOMIC DNA]</scope>
    <source>
        <strain>MC1</strain>
        <plasmid>pMC1</plasmid>
    </source>
</reference>
<reference key="3">
    <citation type="submission" date="2009-09" db="EMBL/GenBank/DDBJ databases">
        <title>Structural analysis of ISCR8, a subgroup of IS91-like elements.</title>
        <authorList>
            <person name="Schleinitz K.M."/>
            <person name="Vallaeys T."/>
            <person name="Kleinsteuber S."/>
        </authorList>
    </citation>
    <scope>NUCLEOTIDE SEQUENCE [GENOMIC DNA]</scope>
    <source>
        <strain>MC1</strain>
        <plasmid>pMC1</plasmid>
    </source>
</reference>
<reference key="4">
    <citation type="journal article" date="2002" name="Microbiol. Res.">
        <title>The two enantiospecific dichlorprop/alpha-ketoglutarate-dioxygenases from Delftia acidovorans MC1 -- protein and sequence data of RdpA and SdpA.</title>
        <authorList>
            <person name="Westendorf A."/>
            <person name="Benndorf D."/>
            <person name="Mueller R.H."/>
            <person name="Babel W."/>
        </authorList>
    </citation>
    <scope>PROTEIN SEQUENCE OF 1-25; 100-106 AND 170-182</scope>
    <scope>FUNCTION</scope>
    <scope>SUBUNIT</scope>
    <source>
        <strain>MC1</strain>
    </source>
</reference>
<reference key="5">
    <citation type="journal article" date="2003" name="Acta Biotechnol.">
        <title>Purification and characterisation of the enantiospecific dioxygenases from Delftia acidovorans MC1 initiating the degradation of phenoxypropionate and phenoxyacetate herbicides.</title>
        <authorList>
            <person name="Westendorf A."/>
            <person name="Mueller R.H."/>
            <person name="Babel W."/>
        </authorList>
    </citation>
    <scope>FUNCTION</scope>
    <scope>CATALYTIC ACTIVITY</scope>
    <scope>BIOPHYSICOCHEMICAL PROPERTIES</scope>
    <scope>COFACTOR</scope>
    <scope>ACTIVITY REGULATION</scope>
    <scope>PATHWAY</scope>
    <scope>SUBSTRATE SPECIFICITY</scope>
    <source>
        <strain>MC1</strain>
    </source>
</reference>
<reference key="6">
    <citation type="journal article" date="2004" name="Microbiology">
        <title>Regulation of catabolic enzymes during long-term exposure of Delftia acidovorans MC1 to chlorophenoxy herbicides.</title>
        <authorList>
            <person name="Benndorf D."/>
            <person name="Davidson I."/>
            <person name="Babel W."/>
        </authorList>
    </citation>
    <scope>INDUCTION</scope>
    <source>
        <strain>MC1</strain>
    </source>
</reference>
<organism>
    <name type="scientific">Delftia acidovorans</name>
    <name type="common">Pseudomonas acidovorans</name>
    <name type="synonym">Comamonas acidovorans</name>
    <dbReference type="NCBI Taxonomy" id="80866"/>
    <lineage>
        <taxon>Bacteria</taxon>
        <taxon>Pseudomonadati</taxon>
        <taxon>Pseudomonadota</taxon>
        <taxon>Betaproteobacteria</taxon>
        <taxon>Burkholderiales</taxon>
        <taxon>Comamonadaceae</taxon>
        <taxon>Delftia</taxon>
    </lineage>
</organism>
<geneLocation type="plasmid">
    <name>pMC1</name>
</geneLocation>
<gene>
    <name evidence="5" type="primary">sdpA</name>
</gene>
<proteinExistence type="evidence at protein level"/>
<sequence length="292" mass="31658">MQTTLQITPTGATLGATVTGVHLATLDDAGFAALHAAWLQHALLIFPGQHLSNDQQITFAKRFGAIERIGGGDIVAISNVKADGTVRQHSPAEWDDMMKVIVGNMAWHADSTYMPVMAQGAVFSAEVVPAVGGRTCFADMRAAYDALDEATRALVHQRSARHSLVYSQSKLGHVQQAGSAYIGYGMDTTATPLRPLVKVHPETGRPSLLIGRHAHAIPGMDAAESERFLEGLVDWACQAPRVHAHQWAAGDVVVWDNRCLLHRAEPWDFKLPRVMWHSRLAGRPETEGAALV</sequence>
<comment type="function">
    <text evidence="4 5">Involved in the degradation of the phenoxypropionate herbicides. Catalyzes the enantiospecific cleavage of the ether bond in the herbicid S-dichlorprop ((S)-2-(2,4-dichlorophenoxy)propionate)(S-2,4-DP) and S-mecoprop ((S)-2-(4-chloro-2-methylphenoxy)propionate)(S-2,4-MCPP). It can also accept (RS)-2-(4-chlorophenoxy)propionate, (RS)-2-(m-chlorophenoxy)propionate and phenoxyacetate derivatives such as 2,4-dichlorophenoxyacetate (2,4-D), however it can only accept 2-oxoglutarate as oxygen acceptor.</text>
</comment>
<comment type="catalytic activity">
    <reaction evidence="4">
        <text>(S)-2-(4-chloro-2-methylphenoxy)propanoate + 2-oxoglutarate + O2 = 2-methyl-4-chlorophenol + pyruvate + succinate + CO2</text>
        <dbReference type="Rhea" id="RHEA:37831"/>
        <dbReference type="ChEBI" id="CHEBI:1800"/>
        <dbReference type="ChEBI" id="CHEBI:15361"/>
        <dbReference type="ChEBI" id="CHEBI:15379"/>
        <dbReference type="ChEBI" id="CHEBI:16526"/>
        <dbReference type="ChEBI" id="CHEBI:16810"/>
        <dbReference type="ChEBI" id="CHEBI:30031"/>
        <dbReference type="ChEBI" id="CHEBI:75285"/>
        <dbReference type="EC" id="1.14.11.43"/>
    </reaction>
</comment>
<comment type="catalytic activity">
    <reaction evidence="4">
        <text>(S)-(2,4-dichlorophenoxy)propanoate + 2-oxoglutarate + O2 = 2,4-dichlorophenol + pyruvate + succinate + CO2</text>
        <dbReference type="Rhea" id="RHEA:37827"/>
        <dbReference type="ChEBI" id="CHEBI:15361"/>
        <dbReference type="ChEBI" id="CHEBI:15379"/>
        <dbReference type="ChEBI" id="CHEBI:16526"/>
        <dbReference type="ChEBI" id="CHEBI:16738"/>
        <dbReference type="ChEBI" id="CHEBI:16810"/>
        <dbReference type="ChEBI" id="CHEBI:30031"/>
        <dbReference type="ChEBI" id="CHEBI:75287"/>
        <dbReference type="EC" id="1.14.11.43"/>
    </reaction>
</comment>
<comment type="cofactor">
    <cofactor evidence="4">
        <name>Fe cation</name>
        <dbReference type="ChEBI" id="CHEBI:24875"/>
    </cofactor>
</comment>
<comment type="cofactor">
    <cofactor evidence="4">
        <name>L-ascorbate</name>
        <dbReference type="ChEBI" id="CHEBI:38290"/>
    </cofactor>
</comment>
<comment type="activity regulation">
    <text evidence="4">Inhibited by divalent cations, most significantly by copper and nickel, and by diethylpyrocarbonate (DEPC).</text>
</comment>
<comment type="biophysicochemical properties">
    <kinetics>
        <KM evidence="4">11.5 uM for (RS)-2-(m-chlorophenoxy)propionate (at pH 6 and 25 degrees Celsius)</KM>
        <KM evidence="4">21.8 uM for S-2,4-MCPP (at pH 6 and 25 degrees Celsius)</KM>
        <KM evidence="4">24.1 uM for alpha-ketoglutarate (at pH 6 and 25 degrees Celsius)</KM>
        <KM evidence="4">49 uM for S-2,4-DP (at pH 6 and 25 degrees Celsius)</KM>
        <KM evidence="4">68.3 uM for (RS)-2-(4-chlorophenoxy)propionate (at pH 6 and 25 degrees Celsius)</KM>
        <KM evidence="4">122.8 uM for 2,4-D (at pH 6 and 25 degrees Celsius)</KM>
        <text evidence="4">kcat is 50 min(-1) for dioxygenase activity with S-2,4-DP (at pH 6 and 25 degrees Celsius). kcat is 46 min(-1) for dioxygenase activity with S-2,4-MCPP (at pH 6 and 25 degrees Celsius). kcat is 36 min(-1) for dioxygenase activity with 2,4-D (at pH 6 and 25 degrees Celsius). kcat is 17 min(-1) for dioxygenase activity with (RS)-2-(4-chlorophenoxy)propionate (at pH 6 and 25 degrees Celsius). kcat is 15 min(-1) for dioxygenase activity with (RS)-2-(m-chlorophenoxy)propionate (at pH 6 and 25 degrees Celsius). kcat is 1.7 min(-1) for dioxygenase activity with alpha-ketoglutarate (at pH 6 and 25 degrees Celsius).</text>
    </kinetics>
    <phDependence>
        <text evidence="4">Optimum pH is about 6.</text>
    </phDependence>
    <temperatureDependence>
        <text evidence="4">Optimum temperature is 25 degrees Celsius.</text>
    </temperatureDependence>
</comment>
<comment type="pathway">
    <text evidence="7">Xenobiotic degradation; 2-(2,4-dichlorophenoxy)propanoate degradation.</text>
</comment>
<comment type="subunit">
    <text evidence="2">Monomer.</text>
</comment>
<comment type="induction">
    <text evidence="3">Repressed during growth on high concentrations of 2,4-dichlorophenoxypropionic acid (2,4-DCPP).</text>
</comment>
<comment type="similarity">
    <text evidence="6">Belongs to the TfdA dioxygenase family.</text>
</comment>
<protein>
    <recommendedName>
        <fullName evidence="5">(S)-phenoxypropionate/alpha-ketoglutarate-dioxygenase</fullName>
        <shortName evidence="5">SdpA</shortName>
        <ecNumber evidence="4">1.14.11.43</ecNumber>
    </recommendedName>
    <alternativeName>
        <fullName evidence="5">(S)-dichlorprop/(S)-mecoprop dioxygenase</fullName>
    </alternativeName>
    <alternativeName>
        <fullName evidence="5">Alpha-ketoglutarate-dependent dioxygenase</fullName>
    </alternativeName>
    <alternativeName>
        <fullName evidence="5">Dichlorprop/alpha-ketoglutarate-dioxygenase</fullName>
    </alternativeName>
    <alternativeName>
        <fullName evidence="5">Mecoprop/alpha-ketoglutarate-dioxygenase</fullName>
    </alternativeName>
</protein>
<feature type="chain" id="PRO_0000097650" description="(S)-phenoxypropionate/alpha-ketoglutarate-dioxygenase">
    <location>
        <begin position="1"/>
        <end position="292"/>
    </location>
</feature>
<feature type="binding site" evidence="1">
    <location>
        <position position="108"/>
    </location>
    <ligand>
        <name>Fe cation</name>
        <dbReference type="ChEBI" id="CHEBI:24875"/>
        <note>catalytic</note>
    </ligand>
</feature>
<feature type="binding site" evidence="1">
    <location>
        <position position="110"/>
    </location>
    <ligand>
        <name>Fe cation</name>
        <dbReference type="ChEBI" id="CHEBI:24875"/>
        <note>catalytic</note>
    </ligand>
</feature>
<feature type="binding site" evidence="1">
    <location>
        <position position="135"/>
    </location>
    <ligand>
        <name>2-oxoglutarate</name>
        <dbReference type="ChEBI" id="CHEBI:16810"/>
    </ligand>
</feature>
<feature type="binding site" evidence="1">
    <location>
        <position position="247"/>
    </location>
    <ligand>
        <name>2-oxoglutarate</name>
        <dbReference type="ChEBI" id="CHEBI:16810"/>
    </ligand>
</feature>
<feature type="binding site" evidence="1">
    <location>
        <position position="262"/>
    </location>
    <ligand>
        <name>Fe cation</name>
        <dbReference type="ChEBI" id="CHEBI:24875"/>
        <note>catalytic</note>
    </ligand>
</feature>
<feature type="binding site" evidence="1">
    <location>
        <position position="273"/>
    </location>
    <ligand>
        <name>2-oxoglutarate</name>
        <dbReference type="ChEBI" id="CHEBI:16810"/>
    </ligand>
</feature>
<feature type="sequence conflict" description="In Ref. 4; AA sequence." evidence="6" ref="4">
    <original>M</original>
    <variation>T</variation>
    <location>
        <position position="105"/>
    </location>
</feature>
<feature type="sequence conflict" description="In Ref. 4; AA sequence." evidence="6" ref="4">
    <original>K</original>
    <variation>G</variation>
    <location>
        <position position="170"/>
    </location>
</feature>
<name>SDPA_DELAC</name>
<dbReference type="EC" id="1.14.11.43" evidence="4"/>
<dbReference type="EMBL" id="AY327575">
    <property type="protein sequence ID" value="AAP88277.1"/>
    <property type="molecule type" value="Genomic_DNA"/>
</dbReference>
<dbReference type="SMR" id="P83309"/>
<dbReference type="KEGG" id="ag:AAP88277"/>
<dbReference type="BRENDA" id="1.14.11.43">
    <property type="organism ID" value="1586"/>
</dbReference>
<dbReference type="UniPathway" id="UPA00348"/>
<dbReference type="GO" id="GO:0051213">
    <property type="term" value="F:dioxygenase activity"/>
    <property type="evidence" value="ECO:0007669"/>
    <property type="project" value="UniProtKB-KW"/>
</dbReference>
<dbReference type="GO" id="GO:0031418">
    <property type="term" value="F:L-ascorbic acid binding"/>
    <property type="evidence" value="ECO:0007669"/>
    <property type="project" value="UniProtKB-KW"/>
</dbReference>
<dbReference type="GO" id="GO:0046872">
    <property type="term" value="F:metal ion binding"/>
    <property type="evidence" value="ECO:0007669"/>
    <property type="project" value="UniProtKB-KW"/>
</dbReference>
<dbReference type="Gene3D" id="3.60.130.10">
    <property type="entry name" value="Clavaminate synthase-like"/>
    <property type="match status" value="1"/>
</dbReference>
<dbReference type="InterPro" id="IPR042098">
    <property type="entry name" value="TauD-like_sf"/>
</dbReference>
<dbReference type="InterPro" id="IPR003819">
    <property type="entry name" value="TauD/TfdA-like"/>
</dbReference>
<dbReference type="InterPro" id="IPR051178">
    <property type="entry name" value="TfdA_dioxygenase"/>
</dbReference>
<dbReference type="PANTHER" id="PTHR43779:SF3">
    <property type="entry name" value="(3R)-3-[(CARBOXYMETHYL)AMINO]FATTY ACID OXYGENASE_DECARBOXYLASE"/>
    <property type="match status" value="1"/>
</dbReference>
<dbReference type="PANTHER" id="PTHR43779">
    <property type="entry name" value="DIOXYGENASE RV0097-RELATED"/>
    <property type="match status" value="1"/>
</dbReference>
<dbReference type="Pfam" id="PF02668">
    <property type="entry name" value="TauD"/>
    <property type="match status" value="1"/>
</dbReference>
<dbReference type="SUPFAM" id="SSF51197">
    <property type="entry name" value="Clavaminate synthase-like"/>
    <property type="match status" value="1"/>
</dbReference>
<accession>P83309</accession>
<accession>Q67FS3</accession>